<reference key="1">
    <citation type="journal article" date="2011" name="Stand. Genomic Sci.">
        <title>Complete genome sequence of the halophilic and highly halotolerant Chromohalobacter salexigens type strain (1H11(T)).</title>
        <authorList>
            <person name="Copeland A."/>
            <person name="O'Connor K."/>
            <person name="Lucas S."/>
            <person name="Lapidus A."/>
            <person name="Berry K.W."/>
            <person name="Detter J.C."/>
            <person name="Del Rio T.G."/>
            <person name="Hammon N."/>
            <person name="Dalin E."/>
            <person name="Tice H."/>
            <person name="Pitluck S."/>
            <person name="Bruce D."/>
            <person name="Goodwin L."/>
            <person name="Han C."/>
            <person name="Tapia R."/>
            <person name="Saunders E."/>
            <person name="Schmutz J."/>
            <person name="Brettin T."/>
            <person name="Larimer F."/>
            <person name="Land M."/>
            <person name="Hauser L."/>
            <person name="Vargas C."/>
            <person name="Nieto J.J."/>
            <person name="Kyrpides N.C."/>
            <person name="Ivanova N."/>
            <person name="Goker M."/>
            <person name="Klenk H.P."/>
            <person name="Csonka L.N."/>
            <person name="Woyke T."/>
        </authorList>
    </citation>
    <scope>NUCLEOTIDE SEQUENCE [LARGE SCALE GENOMIC DNA]</scope>
    <source>
        <strain>ATCC BAA-138 / DSM 3043 / CIP 106854 / NCIMB 13768 / 1H11</strain>
    </source>
</reference>
<proteinExistence type="inferred from homology"/>
<accession>Q1R0B8</accession>
<gene>
    <name evidence="1" type="primary">rpsT</name>
    <name type="ordered locus">Csal_0478</name>
</gene>
<dbReference type="EMBL" id="CP000285">
    <property type="protein sequence ID" value="ABE57840.1"/>
    <property type="molecule type" value="Genomic_DNA"/>
</dbReference>
<dbReference type="RefSeq" id="WP_011505786.1">
    <property type="nucleotide sequence ID" value="NC_007963.1"/>
</dbReference>
<dbReference type="SMR" id="Q1R0B8"/>
<dbReference type="STRING" id="290398.Csal_0478"/>
<dbReference type="GeneID" id="95333231"/>
<dbReference type="KEGG" id="csa:Csal_0478"/>
<dbReference type="eggNOG" id="COG0268">
    <property type="taxonomic scope" value="Bacteria"/>
</dbReference>
<dbReference type="HOGENOM" id="CLU_160655_4_0_6"/>
<dbReference type="OrthoDB" id="9807974at2"/>
<dbReference type="Proteomes" id="UP000000239">
    <property type="component" value="Chromosome"/>
</dbReference>
<dbReference type="GO" id="GO:0005829">
    <property type="term" value="C:cytosol"/>
    <property type="evidence" value="ECO:0007669"/>
    <property type="project" value="TreeGrafter"/>
</dbReference>
<dbReference type="GO" id="GO:0015935">
    <property type="term" value="C:small ribosomal subunit"/>
    <property type="evidence" value="ECO:0007669"/>
    <property type="project" value="TreeGrafter"/>
</dbReference>
<dbReference type="GO" id="GO:0070181">
    <property type="term" value="F:small ribosomal subunit rRNA binding"/>
    <property type="evidence" value="ECO:0007669"/>
    <property type="project" value="TreeGrafter"/>
</dbReference>
<dbReference type="GO" id="GO:0003735">
    <property type="term" value="F:structural constituent of ribosome"/>
    <property type="evidence" value="ECO:0007669"/>
    <property type="project" value="InterPro"/>
</dbReference>
<dbReference type="GO" id="GO:0006412">
    <property type="term" value="P:translation"/>
    <property type="evidence" value="ECO:0007669"/>
    <property type="project" value="UniProtKB-UniRule"/>
</dbReference>
<dbReference type="FunFam" id="1.20.58.110:FF:000001">
    <property type="entry name" value="30S ribosomal protein S20"/>
    <property type="match status" value="1"/>
</dbReference>
<dbReference type="Gene3D" id="1.20.58.110">
    <property type="entry name" value="Ribosomal protein S20"/>
    <property type="match status" value="1"/>
</dbReference>
<dbReference type="HAMAP" id="MF_00500">
    <property type="entry name" value="Ribosomal_bS20"/>
    <property type="match status" value="1"/>
</dbReference>
<dbReference type="InterPro" id="IPR002583">
    <property type="entry name" value="Ribosomal_bS20"/>
</dbReference>
<dbReference type="InterPro" id="IPR036510">
    <property type="entry name" value="Ribosomal_bS20_sf"/>
</dbReference>
<dbReference type="NCBIfam" id="TIGR00029">
    <property type="entry name" value="S20"/>
    <property type="match status" value="1"/>
</dbReference>
<dbReference type="PANTHER" id="PTHR33398">
    <property type="entry name" value="30S RIBOSOMAL PROTEIN S20"/>
    <property type="match status" value="1"/>
</dbReference>
<dbReference type="PANTHER" id="PTHR33398:SF1">
    <property type="entry name" value="SMALL RIBOSOMAL SUBUNIT PROTEIN BS20C"/>
    <property type="match status" value="1"/>
</dbReference>
<dbReference type="Pfam" id="PF01649">
    <property type="entry name" value="Ribosomal_S20p"/>
    <property type="match status" value="1"/>
</dbReference>
<dbReference type="SUPFAM" id="SSF46992">
    <property type="entry name" value="Ribosomal protein S20"/>
    <property type="match status" value="1"/>
</dbReference>
<organism>
    <name type="scientific">Chromohalobacter salexigens (strain ATCC BAA-138 / DSM 3043 / CIP 106854 / NCIMB 13768 / 1H11)</name>
    <dbReference type="NCBI Taxonomy" id="290398"/>
    <lineage>
        <taxon>Bacteria</taxon>
        <taxon>Pseudomonadati</taxon>
        <taxon>Pseudomonadota</taxon>
        <taxon>Gammaproteobacteria</taxon>
        <taxon>Oceanospirillales</taxon>
        <taxon>Halomonadaceae</taxon>
        <taxon>Chromohalobacter</taxon>
    </lineage>
</organism>
<sequence length="88" mass="9967">MANTKQAQKRARQAEQRRQHNASQRSMVRTYIKRVIKAIQGGDHAQAMTEFKAAQPVIDRIADKDAISKKKAARIKSRLNKRIKALAA</sequence>
<evidence type="ECO:0000255" key="1">
    <source>
        <dbReference type="HAMAP-Rule" id="MF_00500"/>
    </source>
</evidence>
<evidence type="ECO:0000256" key="2">
    <source>
        <dbReference type="SAM" id="MobiDB-lite"/>
    </source>
</evidence>
<evidence type="ECO:0000305" key="3"/>
<feature type="chain" id="PRO_0000260110" description="Small ribosomal subunit protein bS20">
    <location>
        <begin position="1"/>
        <end position="88"/>
    </location>
</feature>
<feature type="region of interest" description="Disordered" evidence="2">
    <location>
        <begin position="1"/>
        <end position="27"/>
    </location>
</feature>
<comment type="function">
    <text evidence="1">Binds directly to 16S ribosomal RNA.</text>
</comment>
<comment type="similarity">
    <text evidence="1">Belongs to the bacterial ribosomal protein bS20 family.</text>
</comment>
<keyword id="KW-1185">Reference proteome</keyword>
<keyword id="KW-0687">Ribonucleoprotein</keyword>
<keyword id="KW-0689">Ribosomal protein</keyword>
<keyword id="KW-0694">RNA-binding</keyword>
<keyword id="KW-0699">rRNA-binding</keyword>
<protein>
    <recommendedName>
        <fullName evidence="1">Small ribosomal subunit protein bS20</fullName>
    </recommendedName>
    <alternativeName>
        <fullName evidence="3">30S ribosomal protein S20</fullName>
    </alternativeName>
</protein>
<name>RS20_CHRSD</name>